<comment type="function">
    <text evidence="1">This protein specifically catalyzes the removal of signal peptides from prolipoproteins.</text>
</comment>
<comment type="catalytic activity">
    <reaction evidence="1">
        <text>Release of signal peptides from bacterial membrane prolipoproteins. Hydrolyzes -Xaa-Yaa-Zaa-|-(S,diacylglyceryl)Cys-, in which Xaa is hydrophobic (preferably Leu), and Yaa (Ala or Ser) and Zaa (Gly or Ala) have small, neutral side chains.</text>
        <dbReference type="EC" id="3.4.23.36"/>
    </reaction>
</comment>
<comment type="pathway">
    <text evidence="1">Protein modification; lipoprotein biosynthesis (signal peptide cleavage).</text>
</comment>
<comment type="subcellular location">
    <subcellularLocation>
        <location evidence="1">Cell inner membrane</location>
        <topology evidence="1">Multi-pass membrane protein</topology>
    </subcellularLocation>
</comment>
<comment type="similarity">
    <text evidence="1">Belongs to the peptidase A8 family.</text>
</comment>
<dbReference type="EC" id="3.4.23.36" evidence="1"/>
<dbReference type="EMBL" id="CP000124">
    <property type="protein sequence ID" value="ABA49137.1"/>
    <property type="molecule type" value="Genomic_DNA"/>
</dbReference>
<dbReference type="RefSeq" id="WP_004186086.1">
    <property type="nucleotide sequence ID" value="NC_007434.1"/>
</dbReference>
<dbReference type="SMR" id="Q3JV70"/>
<dbReference type="EnsemblBacteria" id="ABA49137">
    <property type="protein sequence ID" value="ABA49137"/>
    <property type="gene ID" value="BURPS1710b_1121"/>
</dbReference>
<dbReference type="GeneID" id="93059418"/>
<dbReference type="KEGG" id="bpm:BURPS1710b_1121"/>
<dbReference type="HOGENOM" id="CLU_083252_4_0_4"/>
<dbReference type="UniPathway" id="UPA00665"/>
<dbReference type="Proteomes" id="UP000002700">
    <property type="component" value="Chromosome I"/>
</dbReference>
<dbReference type="GO" id="GO:0005886">
    <property type="term" value="C:plasma membrane"/>
    <property type="evidence" value="ECO:0007669"/>
    <property type="project" value="UniProtKB-SubCell"/>
</dbReference>
<dbReference type="GO" id="GO:0004190">
    <property type="term" value="F:aspartic-type endopeptidase activity"/>
    <property type="evidence" value="ECO:0007669"/>
    <property type="project" value="UniProtKB-UniRule"/>
</dbReference>
<dbReference type="GO" id="GO:0006508">
    <property type="term" value="P:proteolysis"/>
    <property type="evidence" value="ECO:0007669"/>
    <property type="project" value="UniProtKB-KW"/>
</dbReference>
<dbReference type="HAMAP" id="MF_00161">
    <property type="entry name" value="LspA"/>
    <property type="match status" value="1"/>
</dbReference>
<dbReference type="InterPro" id="IPR001872">
    <property type="entry name" value="Peptidase_A8"/>
</dbReference>
<dbReference type="NCBIfam" id="TIGR00077">
    <property type="entry name" value="lspA"/>
    <property type="match status" value="1"/>
</dbReference>
<dbReference type="PANTHER" id="PTHR33695">
    <property type="entry name" value="LIPOPROTEIN SIGNAL PEPTIDASE"/>
    <property type="match status" value="1"/>
</dbReference>
<dbReference type="PANTHER" id="PTHR33695:SF1">
    <property type="entry name" value="LIPOPROTEIN SIGNAL PEPTIDASE"/>
    <property type="match status" value="1"/>
</dbReference>
<dbReference type="Pfam" id="PF01252">
    <property type="entry name" value="Peptidase_A8"/>
    <property type="match status" value="1"/>
</dbReference>
<dbReference type="PRINTS" id="PR00781">
    <property type="entry name" value="LIPOSIGPTASE"/>
</dbReference>
<dbReference type="PROSITE" id="PS00855">
    <property type="entry name" value="SPASE_II"/>
    <property type="match status" value="1"/>
</dbReference>
<evidence type="ECO:0000255" key="1">
    <source>
        <dbReference type="HAMAP-Rule" id="MF_00161"/>
    </source>
</evidence>
<gene>
    <name evidence="1" type="primary">lspA</name>
    <name type="ordered locus">BURPS1710b_1121</name>
</gene>
<name>LSPA_BURP1</name>
<sequence>MAKTLSKSSGGALAPWLGISLIVILFDQLTKIAVLKTFAYGAMHALTPFFNLTLIYNRGAAFGFLATAGGWQRWAFTALGIGATLVICYLLKRHGHQRLFSLSLALILGGALGNVIDRLIYGHVIDFLDFHVGAWHWPAFNLADSAITVGAVLLIYDELRRVRGAR</sequence>
<protein>
    <recommendedName>
        <fullName evidence="1">Lipoprotein signal peptidase</fullName>
        <ecNumber evidence="1">3.4.23.36</ecNumber>
    </recommendedName>
    <alternativeName>
        <fullName evidence="1">Prolipoprotein signal peptidase</fullName>
    </alternativeName>
    <alternativeName>
        <fullName evidence="1">Signal peptidase II</fullName>
        <shortName evidence="1">SPase II</shortName>
    </alternativeName>
</protein>
<accession>Q3JV70</accession>
<keyword id="KW-0064">Aspartyl protease</keyword>
<keyword id="KW-0997">Cell inner membrane</keyword>
<keyword id="KW-1003">Cell membrane</keyword>
<keyword id="KW-0378">Hydrolase</keyword>
<keyword id="KW-0472">Membrane</keyword>
<keyword id="KW-0645">Protease</keyword>
<keyword id="KW-0812">Transmembrane</keyword>
<keyword id="KW-1133">Transmembrane helix</keyword>
<proteinExistence type="inferred from homology"/>
<feature type="chain" id="PRO_1000038790" description="Lipoprotein signal peptidase">
    <location>
        <begin position="1"/>
        <end position="166"/>
    </location>
</feature>
<feature type="transmembrane region" description="Helical" evidence="1">
    <location>
        <begin position="10"/>
        <end position="30"/>
    </location>
</feature>
<feature type="transmembrane region" description="Helical" evidence="1">
    <location>
        <begin position="32"/>
        <end position="52"/>
    </location>
</feature>
<feature type="transmembrane region" description="Helical" evidence="1">
    <location>
        <begin position="71"/>
        <end position="91"/>
    </location>
</feature>
<feature type="transmembrane region" description="Helical" evidence="1">
    <location>
        <begin position="100"/>
        <end position="120"/>
    </location>
</feature>
<feature type="transmembrane region" description="Helical" evidence="1">
    <location>
        <begin position="135"/>
        <end position="155"/>
    </location>
</feature>
<feature type="active site" evidence="1">
    <location>
        <position position="126"/>
    </location>
</feature>
<feature type="active site" evidence="1">
    <location>
        <position position="144"/>
    </location>
</feature>
<reference key="1">
    <citation type="journal article" date="2010" name="Genome Biol. Evol.">
        <title>Continuing evolution of Burkholderia mallei through genome reduction and large-scale rearrangements.</title>
        <authorList>
            <person name="Losada L."/>
            <person name="Ronning C.M."/>
            <person name="DeShazer D."/>
            <person name="Woods D."/>
            <person name="Fedorova N."/>
            <person name="Kim H.S."/>
            <person name="Shabalina S.A."/>
            <person name="Pearson T.R."/>
            <person name="Brinkac L."/>
            <person name="Tan P."/>
            <person name="Nandi T."/>
            <person name="Crabtree J."/>
            <person name="Badger J."/>
            <person name="Beckstrom-Sternberg S."/>
            <person name="Saqib M."/>
            <person name="Schutzer S.E."/>
            <person name="Keim P."/>
            <person name="Nierman W.C."/>
        </authorList>
    </citation>
    <scope>NUCLEOTIDE SEQUENCE [LARGE SCALE GENOMIC DNA]</scope>
    <source>
        <strain>1710b</strain>
    </source>
</reference>
<organism>
    <name type="scientific">Burkholderia pseudomallei (strain 1710b)</name>
    <dbReference type="NCBI Taxonomy" id="320372"/>
    <lineage>
        <taxon>Bacteria</taxon>
        <taxon>Pseudomonadati</taxon>
        <taxon>Pseudomonadota</taxon>
        <taxon>Betaproteobacteria</taxon>
        <taxon>Burkholderiales</taxon>
        <taxon>Burkholderiaceae</taxon>
        <taxon>Burkholderia</taxon>
        <taxon>pseudomallei group</taxon>
    </lineage>
</organism>